<proteinExistence type="evidence at protein level"/>
<organism>
    <name type="scientific">Homo sapiens</name>
    <name type="common">Human</name>
    <dbReference type="NCBI Taxonomy" id="9606"/>
    <lineage>
        <taxon>Eukaryota</taxon>
        <taxon>Metazoa</taxon>
        <taxon>Chordata</taxon>
        <taxon>Craniata</taxon>
        <taxon>Vertebrata</taxon>
        <taxon>Euteleostomi</taxon>
        <taxon>Mammalia</taxon>
        <taxon>Eutheria</taxon>
        <taxon>Euarchontoglires</taxon>
        <taxon>Primates</taxon>
        <taxon>Haplorrhini</taxon>
        <taxon>Catarrhini</taxon>
        <taxon>Hominidae</taxon>
        <taxon>Homo</taxon>
    </lineage>
</organism>
<comment type="interaction">
    <interactant intactId="EBI-302355">
        <id>Q9UL42</id>
    </interactant>
    <interactant intactId="EBI-358049">
        <id>Q13895</id>
        <label>BYSL</label>
    </interactant>
    <organismsDiffer>false</organismsDiffer>
    <experiments>7</experiments>
</comment>
<comment type="interaction">
    <interactant intactId="EBI-302355">
        <id>Q9UL42</id>
    </interactant>
    <interactant intactId="EBI-712912">
        <id>Q9HC52</id>
        <label>CBX8</label>
    </interactant>
    <organismsDiffer>false</organismsDiffer>
    <experiments>6</experiments>
</comment>
<comment type="interaction">
    <interactant intactId="EBI-302355">
        <id>Q9UL42</id>
    </interactant>
    <interactant intactId="EBI-295634">
        <id>Q16543</id>
        <label>CDC37</label>
    </interactant>
    <organismsDiffer>false</organismsDiffer>
    <experiments>3</experiments>
</comment>
<comment type="interaction">
    <interactant intactId="EBI-302355">
        <id>Q9UL42</id>
    </interactant>
    <interactant intactId="EBI-741032">
        <id>Q8NE01</id>
        <label>CNNM3</label>
    </interactant>
    <organismsDiffer>false</organismsDiffer>
    <experiments>3</experiments>
</comment>
<comment type="interaction">
    <interactant intactId="EBI-302355">
        <id>Q9UL42</id>
    </interactant>
    <interactant intactId="EBI-21852684">
        <id>P17538</id>
        <label>CTRB1</label>
    </interactant>
    <organismsDiffer>false</organismsDiffer>
    <experiments>2</experiments>
</comment>
<comment type="interaction">
    <interactant intactId="EBI-302355">
        <id>Q9UL42</id>
    </interactant>
    <interactant intactId="EBI-744099">
        <id>Q9H0I2</id>
        <label>ENKD1</label>
    </interactant>
    <organismsDiffer>false</organismsDiffer>
    <experiments>8</experiments>
</comment>
<comment type="interaction">
    <interactant intactId="EBI-302355">
        <id>Q9UL42</id>
    </interactant>
    <interactant intactId="EBI-719941">
        <id>Q3B820</id>
        <label>FAM161A</label>
    </interactant>
    <organismsDiffer>false</organismsDiffer>
    <experiments>4</experiments>
</comment>
<comment type="interaction">
    <interactant intactId="EBI-302355">
        <id>Q9UL42</id>
    </interactant>
    <interactant intactId="EBI-11959863">
        <id>Q9NWQ4-1</id>
        <label>GPATCH2L</label>
    </interactant>
    <organismsDiffer>false</organismsDiffer>
    <experiments>3</experiments>
</comment>
<comment type="interaction">
    <interactant intactId="EBI-302355">
        <id>Q9UL42</id>
    </interactant>
    <interactant intactId="EBI-11956675">
        <id>Q9GZV7</id>
        <label>HAPLN2</label>
    </interactant>
    <organismsDiffer>false</organismsDiffer>
    <experiments>3</experiments>
</comment>
<comment type="interaction">
    <interactant intactId="EBI-302355">
        <id>Q9UL42</id>
    </interactant>
    <interactant intactId="EBI-715611">
        <id>Q9C086</id>
        <label>INO80B</label>
    </interactant>
    <organismsDiffer>false</organismsDiffer>
    <experiments>3</experiments>
</comment>
<comment type="interaction">
    <interactant intactId="EBI-302355">
        <id>Q9UL42</id>
    </interactant>
    <interactant intactId="EBI-2510106">
        <id>Q96L50</id>
        <label>LRR1</label>
    </interactant>
    <organismsDiffer>false</organismsDiffer>
    <experiments>3</experiments>
</comment>
<comment type="interaction">
    <interactant intactId="EBI-302355">
        <id>Q9UL42</id>
    </interactant>
    <interactant intactId="EBI-2555085">
        <id>Q8IVT2</id>
        <label>MISP</label>
    </interactant>
    <organismsDiffer>false</organismsDiffer>
    <experiments>3</experiments>
</comment>
<comment type="interaction">
    <interactant intactId="EBI-302355">
        <id>Q9UL42</id>
    </interactant>
    <interactant intactId="EBI-399257">
        <id>Q15014</id>
        <label>MORF4L2</label>
    </interactant>
    <organismsDiffer>false</organismsDiffer>
    <experiments>3</experiments>
</comment>
<comment type="interaction">
    <interactant intactId="EBI-302355">
        <id>Q9UL42</id>
    </interactant>
    <interactant intactId="EBI-389883">
        <id>P16333</id>
        <label>NCK1</label>
    </interactant>
    <organismsDiffer>false</organismsDiffer>
    <experiments>2</experiments>
</comment>
<comment type="interaction">
    <interactant intactId="EBI-302355">
        <id>Q9UL42</id>
    </interactant>
    <interactant intactId="EBI-741158">
        <id>Q96HA8</id>
        <label>NTAQ1</label>
    </interactant>
    <organismsDiffer>false</organismsDiffer>
    <experiments>3</experiments>
</comment>
<comment type="interaction">
    <interactant intactId="EBI-302355">
        <id>Q9UL42</id>
    </interactant>
    <interactant intactId="EBI-396072">
        <id>Q13427</id>
        <label>PPIG</label>
    </interactant>
    <organismsDiffer>false</organismsDiffer>
    <experiments>3</experiments>
</comment>
<comment type="interaction">
    <interactant intactId="EBI-302355">
        <id>Q9UL42</id>
    </interactant>
    <interactant intactId="EBI-1567797">
        <id>Q8WWY3</id>
        <label>PRPF31</label>
    </interactant>
    <organismsDiffer>false</organismsDiffer>
    <experiments>6</experiments>
</comment>
<comment type="interaction">
    <interactant intactId="EBI-302355">
        <id>Q9UL42</id>
    </interactant>
    <interactant intactId="EBI-359352">
        <id>P25786</id>
        <label>PSMA1</label>
    </interactant>
    <organismsDiffer>false</organismsDiffer>
    <experiments>4</experiments>
</comment>
<comment type="interaction">
    <interactant intactId="EBI-302355">
        <id>Q9UL42</id>
    </interactant>
    <interactant intactId="EBI-16428950">
        <id>A0A0S2Z4G9</id>
        <label>RNF6</label>
    </interactant>
    <organismsDiffer>false</organismsDiffer>
    <experiments>3</experiments>
</comment>
<comment type="interaction">
    <interactant intactId="EBI-302355">
        <id>Q9UL42</id>
    </interactant>
    <interactant intactId="EBI-373337">
        <id>O76064</id>
        <label>RNF8</label>
    </interactant>
    <organismsDiffer>false</organismsDiffer>
    <experiments>7</experiments>
</comment>
<comment type="interaction">
    <interactant intactId="EBI-302355">
        <id>Q9UL42</id>
    </interactant>
    <interactant intactId="EBI-358122">
        <id>P32969</id>
        <label>RPL9P9</label>
    </interactant>
    <organismsDiffer>false</organismsDiffer>
    <experiments>6</experiments>
</comment>
<comment type="interaction">
    <interactant intactId="EBI-302355">
        <id>Q9UL42</id>
    </interactant>
    <interactant intactId="EBI-10217913">
        <id>Q14D33</id>
        <label>RTP5</label>
    </interactant>
    <organismsDiffer>false</organismsDiffer>
    <experiments>3</experiments>
</comment>
<comment type="interaction">
    <interactant intactId="EBI-302355">
        <id>Q9UL42</id>
    </interactant>
    <interactant intactId="EBI-748391">
        <id>Q9BWG6</id>
        <label>SCNM1</label>
    </interactant>
    <organismsDiffer>false</organismsDiffer>
    <experiments>3</experiments>
</comment>
<comment type="interaction">
    <interactant intactId="EBI-302355">
        <id>Q9UL42</id>
    </interactant>
    <interactant intactId="EBI-727004">
        <id>O00560</id>
        <label>SDCBP</label>
    </interactant>
    <organismsDiffer>false</organismsDiffer>
    <experiments>7</experiments>
</comment>
<comment type="interaction">
    <interactant intactId="EBI-302355">
        <id>Q9UL42</id>
    </interactant>
    <interactant intactId="EBI-741350">
        <id>Q9BT49</id>
        <label>THAP7</label>
    </interactant>
    <organismsDiffer>false</organismsDiffer>
    <experiments>3</experiments>
</comment>
<comment type="interaction">
    <interactant intactId="EBI-302355">
        <id>Q9UL42</id>
    </interactant>
    <interactant intactId="EBI-373403">
        <id>O95985</id>
        <label>TOP3B</label>
    </interactant>
    <organismsDiffer>false</organismsDiffer>
    <experiments>3</experiments>
</comment>
<comment type="interaction">
    <interactant intactId="EBI-302355">
        <id>Q9UL42</id>
    </interactant>
    <interactant intactId="EBI-7844656">
        <id>Q6ZVT0</id>
        <label>TTLL10</label>
    </interactant>
    <organismsDiffer>false</organismsDiffer>
    <experiments>3</experiments>
</comment>
<comment type="interaction">
    <interactant intactId="EBI-302355">
        <id>Q9UL42</id>
    </interactant>
    <interactant intactId="EBI-347633">
        <id>Q9H9D4</id>
        <label>ZNF408</label>
    </interactant>
    <organismsDiffer>false</organismsDiffer>
    <experiments>3</experiments>
</comment>
<comment type="interaction">
    <interactant intactId="EBI-302355">
        <id>Q9UL42</id>
    </interactant>
    <interactant intactId="EBI-740727">
        <id>Q8TAU3</id>
        <label>ZNF417</label>
    </interactant>
    <organismsDiffer>false</organismsDiffer>
    <experiments>4</experiments>
</comment>
<comment type="interaction">
    <interactant intactId="EBI-302355">
        <id>Q9UL42</id>
    </interactant>
    <interactant intactId="EBI-6427977">
        <id>Q96SQ5</id>
        <label>ZNF587</label>
    </interactant>
    <organismsDiffer>false</organismsDiffer>
    <experiments>6</experiments>
</comment>
<comment type="interaction">
    <interactant intactId="EBI-302355">
        <id>Q9UL42</id>
    </interactant>
    <interactant intactId="EBI-12006574">
        <id>Q96BR6</id>
        <label>ZNF669</label>
    </interactant>
    <organismsDiffer>false</organismsDiffer>
    <experiments>3</experiments>
</comment>
<comment type="interaction">
    <interactant intactId="EBI-302355">
        <id>Q9UL42</id>
    </interactant>
    <interactant intactId="EBI-16429014">
        <id>A0A0S2Z5X4</id>
        <label>ZNF688</label>
    </interactant>
    <organismsDiffer>false</organismsDiffer>
    <experiments>3</experiments>
</comment>
<comment type="interaction">
    <interactant intactId="EBI-302355">
        <id>Q9UL42</id>
    </interactant>
    <interactant intactId="EBI-3925400">
        <id>A8K8V0</id>
        <label>ZNF785</label>
    </interactant>
    <organismsDiffer>false</organismsDiffer>
    <experiments>4</experiments>
</comment>
<comment type="subcellular location">
    <subcellularLocation>
        <location evidence="2">Nucleus</location>
        <location evidence="2">Nucleolus</location>
    </subcellularLocation>
</comment>
<comment type="tissue specificity">
    <text evidence="3 4">Brain-specific. In some cancer patients, specifically expressed by testicular tumor cells.</text>
</comment>
<comment type="miscellaneous">
    <text>Antibodies against PNMA2 are present in sera from patients suffering of paraneoplastic neurological disorders.</text>
</comment>
<comment type="similarity">
    <text evidence="6">Belongs to the PNMA family.</text>
</comment>
<comment type="sequence caution" evidence="6">
    <conflict type="erroneous initiation">
        <sequence resource="EMBL-CDS" id="BAA74906"/>
    </conflict>
</comment>
<protein>
    <recommendedName>
        <fullName>Paraneoplastic antigen Ma2</fullName>
    </recommendedName>
    <alternativeName>
        <fullName>40 kDa neuronal protein</fullName>
    </alternativeName>
    <alternativeName>
        <fullName>Onconeuronal antigen Ma2</fullName>
    </alternativeName>
    <alternativeName>
        <fullName>Paraneoplastic neuronal antigen MM2</fullName>
    </alternativeName>
</protein>
<reference key="1">
    <citation type="journal article" date="1999" name="N. Engl. J. Med.">
        <title>A serologic marker of paraneoplastic limbic and brain-stem encephalitis in patients with testicular cancer.</title>
        <authorList>
            <person name="Voltz R."/>
            <person name="Gultekin S.H."/>
            <person name="Rosenfeld M.R."/>
            <person name="Gerstner E."/>
            <person name="Eichen J."/>
            <person name="Posner J.B."/>
            <person name="Dalmau J."/>
        </authorList>
    </citation>
    <scope>NUCLEOTIDE SEQUENCE [MRNA]</scope>
    <scope>TISSUE SPECIFICITY</scope>
    <source>
        <tissue>Cerebellum</tissue>
    </source>
</reference>
<reference key="2">
    <citation type="journal article" date="2001" name="Ann. Neurol.">
        <title>Molecular and clinical diversity in paraneoplastic immunity to Ma proteins.</title>
        <authorList>
            <person name="Rosenfeld M.R."/>
            <person name="Eichen J.G."/>
            <person name="Wade D.F."/>
            <person name="Posner J.B."/>
            <person name="Dalmau J."/>
        </authorList>
    </citation>
    <scope>NUCLEOTIDE SEQUENCE [MRNA]</scope>
    <source>
        <tissue>Brain stem</tissue>
    </source>
</reference>
<reference key="3">
    <citation type="journal article" date="1998" name="DNA Res.">
        <title>Prediction of the coding sequences of unidentified human genes. XII. The complete sequences of 100 new cDNA clones from brain which code for large proteins in vitro.</title>
        <authorList>
            <person name="Nagase T."/>
            <person name="Ishikawa K."/>
            <person name="Suyama M."/>
            <person name="Kikuno R."/>
            <person name="Hirosawa M."/>
            <person name="Miyajima N."/>
            <person name="Tanaka A."/>
            <person name="Kotani H."/>
            <person name="Nomura N."/>
            <person name="Ohara O."/>
        </authorList>
    </citation>
    <scope>NUCLEOTIDE SEQUENCE [LARGE SCALE MRNA]</scope>
    <source>
        <tissue>Brain</tissue>
    </source>
</reference>
<reference key="4">
    <citation type="journal article" date="2004" name="Nat. Genet.">
        <title>Complete sequencing and characterization of 21,243 full-length human cDNAs.</title>
        <authorList>
            <person name="Ota T."/>
            <person name="Suzuki Y."/>
            <person name="Nishikawa T."/>
            <person name="Otsuki T."/>
            <person name="Sugiyama T."/>
            <person name="Irie R."/>
            <person name="Wakamatsu A."/>
            <person name="Hayashi K."/>
            <person name="Sato H."/>
            <person name="Nagai K."/>
            <person name="Kimura K."/>
            <person name="Makita H."/>
            <person name="Sekine M."/>
            <person name="Obayashi M."/>
            <person name="Nishi T."/>
            <person name="Shibahara T."/>
            <person name="Tanaka T."/>
            <person name="Ishii S."/>
            <person name="Yamamoto J."/>
            <person name="Saito K."/>
            <person name="Kawai Y."/>
            <person name="Isono Y."/>
            <person name="Nakamura Y."/>
            <person name="Nagahari K."/>
            <person name="Murakami K."/>
            <person name="Yasuda T."/>
            <person name="Iwayanagi T."/>
            <person name="Wagatsuma M."/>
            <person name="Shiratori A."/>
            <person name="Sudo H."/>
            <person name="Hosoiri T."/>
            <person name="Kaku Y."/>
            <person name="Kodaira H."/>
            <person name="Kondo H."/>
            <person name="Sugawara M."/>
            <person name="Takahashi M."/>
            <person name="Kanda K."/>
            <person name="Yokoi T."/>
            <person name="Furuya T."/>
            <person name="Kikkawa E."/>
            <person name="Omura Y."/>
            <person name="Abe K."/>
            <person name="Kamihara K."/>
            <person name="Katsuta N."/>
            <person name="Sato K."/>
            <person name="Tanikawa M."/>
            <person name="Yamazaki M."/>
            <person name="Ninomiya K."/>
            <person name="Ishibashi T."/>
            <person name="Yamashita H."/>
            <person name="Murakawa K."/>
            <person name="Fujimori K."/>
            <person name="Tanai H."/>
            <person name="Kimata M."/>
            <person name="Watanabe M."/>
            <person name="Hiraoka S."/>
            <person name="Chiba Y."/>
            <person name="Ishida S."/>
            <person name="Ono Y."/>
            <person name="Takiguchi S."/>
            <person name="Watanabe S."/>
            <person name="Yosida M."/>
            <person name="Hotuta T."/>
            <person name="Kusano J."/>
            <person name="Kanehori K."/>
            <person name="Takahashi-Fujii A."/>
            <person name="Hara H."/>
            <person name="Tanase T.-O."/>
            <person name="Nomura Y."/>
            <person name="Togiya S."/>
            <person name="Komai F."/>
            <person name="Hara R."/>
            <person name="Takeuchi K."/>
            <person name="Arita M."/>
            <person name="Imose N."/>
            <person name="Musashino K."/>
            <person name="Yuuki H."/>
            <person name="Oshima A."/>
            <person name="Sasaki N."/>
            <person name="Aotsuka S."/>
            <person name="Yoshikawa Y."/>
            <person name="Matsunawa H."/>
            <person name="Ichihara T."/>
            <person name="Shiohata N."/>
            <person name="Sano S."/>
            <person name="Moriya S."/>
            <person name="Momiyama H."/>
            <person name="Satoh N."/>
            <person name="Takami S."/>
            <person name="Terashima Y."/>
            <person name="Suzuki O."/>
            <person name="Nakagawa S."/>
            <person name="Senoh A."/>
            <person name="Mizoguchi H."/>
            <person name="Goto Y."/>
            <person name="Shimizu F."/>
            <person name="Wakebe H."/>
            <person name="Hishigaki H."/>
            <person name="Watanabe T."/>
            <person name="Sugiyama A."/>
            <person name="Takemoto M."/>
            <person name="Kawakami B."/>
            <person name="Yamazaki M."/>
            <person name="Watanabe K."/>
            <person name="Kumagai A."/>
            <person name="Itakura S."/>
            <person name="Fukuzumi Y."/>
            <person name="Fujimori Y."/>
            <person name="Komiyama M."/>
            <person name="Tashiro H."/>
            <person name="Tanigami A."/>
            <person name="Fujiwara T."/>
            <person name="Ono T."/>
            <person name="Yamada K."/>
            <person name="Fujii Y."/>
            <person name="Ozaki K."/>
            <person name="Hirao M."/>
            <person name="Ohmori Y."/>
            <person name="Kawabata A."/>
            <person name="Hikiji T."/>
            <person name="Kobatake N."/>
            <person name="Inagaki H."/>
            <person name="Ikema Y."/>
            <person name="Okamoto S."/>
            <person name="Okitani R."/>
            <person name="Kawakami T."/>
            <person name="Noguchi S."/>
            <person name="Itoh T."/>
            <person name="Shigeta K."/>
            <person name="Senba T."/>
            <person name="Matsumura K."/>
            <person name="Nakajima Y."/>
            <person name="Mizuno T."/>
            <person name="Morinaga M."/>
            <person name="Sasaki M."/>
            <person name="Togashi T."/>
            <person name="Oyama M."/>
            <person name="Hata H."/>
            <person name="Watanabe M."/>
            <person name="Komatsu T."/>
            <person name="Mizushima-Sugano J."/>
            <person name="Satoh T."/>
            <person name="Shirai Y."/>
            <person name="Takahashi Y."/>
            <person name="Nakagawa K."/>
            <person name="Okumura K."/>
            <person name="Nagase T."/>
            <person name="Nomura N."/>
            <person name="Kikuchi H."/>
            <person name="Masuho Y."/>
            <person name="Yamashita R."/>
            <person name="Nakai K."/>
            <person name="Yada T."/>
            <person name="Nakamura Y."/>
            <person name="Ohara O."/>
            <person name="Isogai T."/>
            <person name="Sugano S."/>
        </authorList>
    </citation>
    <scope>NUCLEOTIDE SEQUENCE [LARGE SCALE MRNA]</scope>
    <source>
        <tissue>Brain</tissue>
    </source>
</reference>
<reference key="5">
    <citation type="submission" date="2005-09" db="EMBL/GenBank/DDBJ databases">
        <authorList>
            <person name="Mural R.J."/>
            <person name="Istrail S."/>
            <person name="Sutton G.G."/>
            <person name="Florea L."/>
            <person name="Halpern A.L."/>
            <person name="Mobarry C.M."/>
            <person name="Lippert R."/>
            <person name="Walenz B."/>
            <person name="Shatkay H."/>
            <person name="Dew I."/>
            <person name="Miller J.R."/>
            <person name="Flanigan M.J."/>
            <person name="Edwards N.J."/>
            <person name="Bolanos R."/>
            <person name="Fasulo D."/>
            <person name="Halldorsson B.V."/>
            <person name="Hannenhalli S."/>
            <person name="Turner R."/>
            <person name="Yooseph S."/>
            <person name="Lu F."/>
            <person name="Nusskern D.R."/>
            <person name="Shue B.C."/>
            <person name="Zheng X.H."/>
            <person name="Zhong F."/>
            <person name="Delcher A.L."/>
            <person name="Huson D.H."/>
            <person name="Kravitz S.A."/>
            <person name="Mouchard L."/>
            <person name="Reinert K."/>
            <person name="Remington K.A."/>
            <person name="Clark A.G."/>
            <person name="Waterman M.S."/>
            <person name="Eichler E.E."/>
            <person name="Adams M.D."/>
            <person name="Hunkapiller M.W."/>
            <person name="Myers E.W."/>
            <person name="Venter J.C."/>
        </authorList>
    </citation>
    <scope>NUCLEOTIDE SEQUENCE [LARGE SCALE GENOMIC DNA]</scope>
</reference>
<reference key="6">
    <citation type="journal article" date="2004" name="Genome Res.">
        <title>The status, quality, and expansion of the NIH full-length cDNA project: the Mammalian Gene Collection (MGC).</title>
        <authorList>
            <consortium name="The MGC Project Team"/>
        </authorList>
    </citation>
    <scope>NUCLEOTIDE SEQUENCE [LARGE SCALE MRNA]</scope>
    <source>
        <tissue>Brain</tissue>
        <tissue>Ovary</tissue>
    </source>
</reference>
<reference key="7">
    <citation type="submission" date="2009-03" db="UniProtKB">
        <authorList>
            <person name="Bienvenut W.V."/>
            <person name="Waridel P."/>
            <person name="Quadroni M."/>
        </authorList>
    </citation>
    <scope>PROTEIN SEQUENCE OF 2-11; 20-44; 58-85; 95-122 AND 239-247</scope>
    <scope>CLEAVAGE OF INITIATOR METHIONINE</scope>
    <scope>ACETYLATION AT ALA-2</scope>
    <scope>IDENTIFICATION BY MASS SPECTROMETRY</scope>
    <source>
        <tissue>Embryonic kidney</tissue>
    </source>
</reference>
<reference key="8">
    <citation type="journal article" date="1999" name="Brain">
        <title>Ma1, a novel neuron- and testis-specific protein, is recognized by the serum of patients with paraneoplastic neurological disorders.</title>
        <authorList>
            <person name="Dalmau J."/>
            <person name="Gultekin S.H."/>
            <person name="Voltz R."/>
            <person name="Hoard R."/>
            <person name="DesChamps T."/>
            <person name="Balmaceda C."/>
            <person name="Batchelor T."/>
            <person name="Gerstner E."/>
            <person name="Eichen J."/>
            <person name="Frennier J."/>
            <person name="Posner J.B."/>
            <person name="Rosenfeld M.R."/>
        </authorList>
    </citation>
    <scope>IDENTIFICATION</scope>
    <scope>SUBCELLULAR LOCATION</scope>
</reference>
<reference key="9">
    <citation type="journal article" date="2009" name="Cereb. Cortex">
        <title>Paraneoplastic antigen-like 5 gene (PNMA5) is preferentially expressed in the association areas in a primate specific manner.</title>
        <authorList>
            <person name="Takaji M."/>
            <person name="Komatsu Y."/>
            <person name="Watakabe A."/>
            <person name="Hashikawa T."/>
            <person name="Yamamori T."/>
        </authorList>
    </citation>
    <scope>TISSUE SPECIFICITY</scope>
</reference>
<reference key="10">
    <citation type="journal article" date="2011" name="BMC Syst. Biol.">
        <title>Initial characterization of the human central proteome.</title>
        <authorList>
            <person name="Burkard T.R."/>
            <person name="Planyavsky M."/>
            <person name="Kaupe I."/>
            <person name="Breitwieser F.P."/>
            <person name="Buerckstuemmer T."/>
            <person name="Bennett K.L."/>
            <person name="Superti-Furga G."/>
            <person name="Colinge J."/>
        </authorList>
    </citation>
    <scope>IDENTIFICATION BY MASS SPECTROMETRY [LARGE SCALE ANALYSIS]</scope>
</reference>
<sequence length="364" mass="41509">MALALLEDWCRIMSVDEQKSLMVTGIPADFEEAEIQEVLQETLKSLGRYRLLGKIFRKQENANAVLLELLEDTDVSAIPSEVQGKGGVWKVIFKTPNQDTEFLERLNLFLEKEGQTVSGMFRALGQEGVSPATVPCISPELLAHLLGQAMAHAPQPLLPMRYRKLRVFSGSAVPAPEEESFEVWLEQATEIVKEWPVTEAEKKRWLAESLRGPALDLMHIVQADNPSISVEECLEAFKQVFGSLESRRTAQVRYLKTYQEEGEKVSAYVLRLETLLRRAVEKRAIPRRIADQVRLEQVMAGATLNQMLWCRLRELKDQGPPPSFLELMKVIREEEEEEASFENESIEEPEERDGYGRWNHEGDD</sequence>
<name>PNMA2_HUMAN</name>
<keyword id="KW-0002">3D-structure</keyword>
<keyword id="KW-0007">Acetylation</keyword>
<keyword id="KW-0903">Direct protein sequencing</keyword>
<keyword id="KW-0539">Nucleus</keyword>
<keyword id="KW-1267">Proteomics identification</keyword>
<keyword id="KW-1185">Reference proteome</keyword>
<keyword id="KW-0825">Tumor antigen</keyword>
<dbReference type="EMBL" id="AF037365">
    <property type="protein sequence ID" value="AAD02098.1"/>
    <property type="molecule type" value="mRNA"/>
</dbReference>
<dbReference type="EMBL" id="AF083114">
    <property type="protein sequence ID" value="AAF05625.1"/>
    <property type="molecule type" value="mRNA"/>
</dbReference>
<dbReference type="EMBL" id="AF083115">
    <property type="protein sequence ID" value="AAF05626.1"/>
    <property type="molecule type" value="mRNA"/>
</dbReference>
<dbReference type="EMBL" id="AF286487">
    <property type="protein sequence ID" value="AAG28165.1"/>
    <property type="molecule type" value="mRNA"/>
</dbReference>
<dbReference type="EMBL" id="AB020690">
    <property type="protein sequence ID" value="BAA74906.2"/>
    <property type="status" value="ALT_INIT"/>
    <property type="molecule type" value="mRNA"/>
</dbReference>
<dbReference type="EMBL" id="AK055325">
    <property type="protein sequence ID" value="BAG51501.1"/>
    <property type="molecule type" value="mRNA"/>
</dbReference>
<dbReference type="EMBL" id="CH471080">
    <property type="protein sequence ID" value="EAW63575.1"/>
    <property type="molecule type" value="Genomic_DNA"/>
</dbReference>
<dbReference type="EMBL" id="BC047515">
    <property type="protein sequence ID" value="AAH47515.1"/>
    <property type="molecule type" value="mRNA"/>
</dbReference>
<dbReference type="EMBL" id="BC062301">
    <property type="protein sequence ID" value="AAH62301.1"/>
    <property type="molecule type" value="mRNA"/>
</dbReference>
<dbReference type="CCDS" id="CCDS34868.1"/>
<dbReference type="RefSeq" id="NP_009188.1">
    <property type="nucleotide sequence ID" value="NM_007257.6"/>
</dbReference>
<dbReference type="RefSeq" id="XP_011542667.1">
    <property type="nucleotide sequence ID" value="XM_011544365.4"/>
</dbReference>
<dbReference type="RefSeq" id="XP_054215571.1">
    <property type="nucleotide sequence ID" value="XM_054359596.1"/>
</dbReference>
<dbReference type="PDB" id="8UYO">
    <property type="method" value="EM"/>
    <property type="resolution" value="3.30 A"/>
    <property type="chains" value="1=1-364"/>
</dbReference>
<dbReference type="PDBsum" id="8UYO"/>
<dbReference type="EMDB" id="EMD-42812"/>
<dbReference type="SMR" id="Q9UL42"/>
<dbReference type="BioGRID" id="115926">
    <property type="interactions" value="253"/>
</dbReference>
<dbReference type="FunCoup" id="Q9UL42">
    <property type="interactions" value="659"/>
</dbReference>
<dbReference type="IntAct" id="Q9UL42">
    <property type="interactions" value="236"/>
</dbReference>
<dbReference type="MINT" id="Q9UL42"/>
<dbReference type="STRING" id="9606.ENSP00000429344"/>
<dbReference type="iPTMnet" id="Q9UL42"/>
<dbReference type="PhosphoSitePlus" id="Q9UL42"/>
<dbReference type="BioMuta" id="PNMA2"/>
<dbReference type="DMDM" id="37999812"/>
<dbReference type="jPOST" id="Q9UL42"/>
<dbReference type="MassIVE" id="Q9UL42"/>
<dbReference type="PaxDb" id="9606-ENSP00000429344"/>
<dbReference type="PeptideAtlas" id="Q9UL42"/>
<dbReference type="ProteomicsDB" id="84944"/>
<dbReference type="Pumba" id="Q9UL42"/>
<dbReference type="Antibodypedia" id="35067">
    <property type="antibodies" value="177 antibodies from 24 providers"/>
</dbReference>
<dbReference type="DNASU" id="10687"/>
<dbReference type="Ensembl" id="ENST00000522362.7">
    <property type="protein sequence ID" value="ENSP00000429344.1"/>
    <property type="gene ID" value="ENSG00000240694.9"/>
</dbReference>
<dbReference type="GeneID" id="10687"/>
<dbReference type="KEGG" id="hsa:10687"/>
<dbReference type="MANE-Select" id="ENST00000522362.7">
    <property type="protein sequence ID" value="ENSP00000429344.1"/>
    <property type="RefSeq nucleotide sequence ID" value="NM_007257.6"/>
    <property type="RefSeq protein sequence ID" value="NP_009188.1"/>
</dbReference>
<dbReference type="UCSC" id="uc003xez.3">
    <property type="organism name" value="human"/>
</dbReference>
<dbReference type="AGR" id="HGNC:9159"/>
<dbReference type="CTD" id="10687"/>
<dbReference type="DisGeNET" id="10687"/>
<dbReference type="GeneCards" id="PNMA2"/>
<dbReference type="HGNC" id="HGNC:9159">
    <property type="gene designation" value="PNMA2"/>
</dbReference>
<dbReference type="HPA" id="ENSG00000240694">
    <property type="expression patterns" value="Tissue enriched (brain)"/>
</dbReference>
<dbReference type="MIM" id="603970">
    <property type="type" value="gene"/>
</dbReference>
<dbReference type="neXtProt" id="NX_Q9UL42"/>
<dbReference type="OpenTargets" id="ENSG00000240694"/>
<dbReference type="PharmGKB" id="PA33482"/>
<dbReference type="VEuPathDB" id="HostDB:ENSG00000240694"/>
<dbReference type="eggNOG" id="ENOG502RWTN">
    <property type="taxonomic scope" value="Eukaryota"/>
</dbReference>
<dbReference type="GeneTree" id="ENSGT01030000234522"/>
<dbReference type="HOGENOM" id="CLU_014694_0_0_1"/>
<dbReference type="InParanoid" id="Q9UL42"/>
<dbReference type="OMA" id="GPWENEA"/>
<dbReference type="OrthoDB" id="115435at2759"/>
<dbReference type="PAN-GO" id="Q9UL42">
    <property type="GO annotations" value="0 GO annotations based on evolutionary models"/>
</dbReference>
<dbReference type="PhylomeDB" id="Q9UL42"/>
<dbReference type="TreeFam" id="TF335054"/>
<dbReference type="PathwayCommons" id="Q9UL42"/>
<dbReference type="SignaLink" id="Q9UL42"/>
<dbReference type="BioGRID-ORCS" id="10687">
    <property type="hits" value="14 hits in 1140 CRISPR screens"/>
</dbReference>
<dbReference type="CD-CODE" id="91857CE7">
    <property type="entry name" value="Nucleolus"/>
</dbReference>
<dbReference type="ChiTaRS" id="PNMA2">
    <property type="organism name" value="human"/>
</dbReference>
<dbReference type="GeneWiki" id="PNMA2"/>
<dbReference type="GenomeRNAi" id="10687"/>
<dbReference type="Pharos" id="Q9UL42">
    <property type="development level" value="Tbio"/>
</dbReference>
<dbReference type="PRO" id="PR:Q9UL42"/>
<dbReference type="Proteomes" id="UP000005640">
    <property type="component" value="Chromosome 8"/>
</dbReference>
<dbReference type="RNAct" id="Q9UL42">
    <property type="molecule type" value="protein"/>
</dbReference>
<dbReference type="Bgee" id="ENSG00000240694">
    <property type="expression patterns" value="Expressed in orbitofrontal cortex and 172 other cell types or tissues"/>
</dbReference>
<dbReference type="GO" id="GO:0005730">
    <property type="term" value="C:nucleolus"/>
    <property type="evidence" value="ECO:0007669"/>
    <property type="project" value="UniProtKB-SubCell"/>
</dbReference>
<dbReference type="GO" id="GO:0043065">
    <property type="term" value="P:positive regulation of apoptotic process"/>
    <property type="evidence" value="ECO:0000250"/>
    <property type="project" value="UniProtKB"/>
</dbReference>
<dbReference type="InterPro" id="IPR026523">
    <property type="entry name" value="PNMA"/>
</dbReference>
<dbReference type="InterPro" id="IPR048270">
    <property type="entry name" value="PNMA_C"/>
</dbReference>
<dbReference type="InterPro" id="IPR048271">
    <property type="entry name" value="PNMA_N"/>
</dbReference>
<dbReference type="PANTHER" id="PTHR23095">
    <property type="entry name" value="PARANEOPLASTIC ANTIGEN"/>
    <property type="match status" value="1"/>
</dbReference>
<dbReference type="PANTHER" id="PTHR23095:SF16">
    <property type="entry name" value="PARANEOPLASTIC ANTIGEN MA2"/>
    <property type="match status" value="1"/>
</dbReference>
<dbReference type="Pfam" id="PF14893">
    <property type="entry name" value="PNMA"/>
    <property type="match status" value="1"/>
</dbReference>
<dbReference type="Pfam" id="PF20846">
    <property type="entry name" value="PNMA_N"/>
    <property type="match status" value="1"/>
</dbReference>
<gene>
    <name type="primary">PNMA2</name>
    <name type="synonym">KIAA0883</name>
    <name type="synonym">MA2</name>
</gene>
<evidence type="ECO:0000256" key="1">
    <source>
        <dbReference type="SAM" id="MobiDB-lite"/>
    </source>
</evidence>
<evidence type="ECO:0000269" key="2">
    <source>
    </source>
</evidence>
<evidence type="ECO:0000269" key="3">
    <source>
    </source>
</evidence>
<evidence type="ECO:0000269" key="4">
    <source>
    </source>
</evidence>
<evidence type="ECO:0000269" key="5">
    <source ref="7"/>
</evidence>
<evidence type="ECO:0000305" key="6"/>
<feature type="initiator methionine" description="Removed" evidence="5">
    <location>
        <position position="1"/>
    </location>
</feature>
<feature type="chain" id="PRO_0000155202" description="Paraneoplastic antigen Ma2">
    <location>
        <begin position="2"/>
        <end position="364"/>
    </location>
</feature>
<feature type="region of interest" description="Disordered" evidence="1">
    <location>
        <begin position="335"/>
        <end position="364"/>
    </location>
</feature>
<feature type="compositionally biased region" description="Acidic residues" evidence="1">
    <location>
        <begin position="335"/>
        <end position="351"/>
    </location>
</feature>
<feature type="compositionally biased region" description="Basic and acidic residues" evidence="1">
    <location>
        <begin position="352"/>
        <end position="364"/>
    </location>
</feature>
<feature type="modified residue" description="N-acetylalanine" evidence="5">
    <location>
        <position position="2"/>
    </location>
</feature>
<feature type="sequence variant" id="VAR_053597" description="In dbSNP:rs2233701.">
    <original>E</original>
    <variation>K</variation>
    <location>
        <position position="186"/>
    </location>
</feature>
<feature type="sequence conflict" description="In Ref. 1; AAD02098." evidence="6" ref="1">
    <original>GV</original>
    <variation>AL</variation>
    <location>
        <begin position="128"/>
        <end position="129"/>
    </location>
</feature>
<feature type="sequence conflict" description="In Ref. 1; AAD02098." evidence="6" ref="1">
    <original>L</original>
    <variation>I</variation>
    <location>
        <position position="141"/>
    </location>
</feature>
<feature type="sequence conflict" description="In Ref. 1; AAF05625." evidence="6" ref="1">
    <original>T</original>
    <variation>P</variation>
    <location>
        <position position="257"/>
    </location>
</feature>
<feature type="sequence conflict" description="In Ref. 1; AAF05626." evidence="6" ref="1">
    <original>R</original>
    <variation>K</variation>
    <location>
        <position position="278"/>
    </location>
</feature>
<accession>Q9UL42</accession>
<accession>B3KNY9</accession>
<accession>O94959</accession>
<accession>O95145</accession>
<accession>Q49A18</accession>
<accession>Q9UL43</accession>